<proteinExistence type="evidence at transcript level"/>
<comment type="subcellular location">
    <subcellularLocation>
        <location>Secreted</location>
        <location>Extracellular space</location>
    </subcellularLocation>
</comment>
<comment type="tissue specificity">
    <text>Testis.</text>
</comment>
<comment type="induction">
    <text>By testosterone.</text>
</comment>
<comment type="similarity">
    <text evidence="3">Belongs to the SVP2/SVP5/SVP6 family.</text>
</comment>
<evidence type="ECO:0000250" key="1"/>
<evidence type="ECO:0000256" key="2">
    <source>
        <dbReference type="SAM" id="MobiDB-lite"/>
    </source>
</evidence>
<evidence type="ECO:0000305" key="3"/>
<sequence length="122" mass="13019">MSPTSFFLLTLLLVLVTEARGARERFSQSAEDPSSSHMGIKIRAGGSGSGSAMEEYSVSENSWSNFKSKHPSSISSESFHEESSSSSEMSSSGGHFGLKMRGSQAGGGMSSFKTRVKSRILK</sequence>
<gene>
    <name type="primary">Svs5</name>
    <name type="synonym">Svp5</name>
</gene>
<keyword id="KW-1185">Reference proteome</keyword>
<keyword id="KW-0964">Secreted</keyword>
<keyword id="KW-0732">Signal</keyword>
<feature type="signal peptide" evidence="1">
    <location>
        <begin position="1"/>
        <end position="21"/>
    </location>
</feature>
<feature type="chain" id="PRO_0000022454" description="Seminal vesicle secretory protein 5">
    <location>
        <begin position="22"/>
        <end position="122"/>
    </location>
</feature>
<feature type="region of interest" description="Disordered" evidence="2">
    <location>
        <begin position="23"/>
        <end position="122"/>
    </location>
</feature>
<feature type="compositionally biased region" description="Polar residues" evidence="2">
    <location>
        <begin position="27"/>
        <end position="37"/>
    </location>
</feature>
<dbReference type="EMBL" id="X63161">
    <property type="protein sequence ID" value="CAA44859.1"/>
    <property type="molecule type" value="mRNA"/>
</dbReference>
<dbReference type="EMBL" id="X57139">
    <property type="protein sequence ID" value="CAA40418.1"/>
    <property type="molecule type" value="mRNA"/>
</dbReference>
<dbReference type="CCDS" id="CCDS17032.1"/>
<dbReference type="PIR" id="I55688">
    <property type="entry name" value="I55688"/>
</dbReference>
<dbReference type="PIR" id="S29540">
    <property type="entry name" value="S29540"/>
</dbReference>
<dbReference type="RefSeq" id="NP_033327.1">
    <property type="nucleotide sequence ID" value="NM_009301.2"/>
</dbReference>
<dbReference type="FunCoup" id="P30933">
    <property type="interactions" value="31"/>
</dbReference>
<dbReference type="STRING" id="10090.ENSMUSP00000017148"/>
<dbReference type="iPTMnet" id="P30933"/>
<dbReference type="PhosphoSitePlus" id="P30933"/>
<dbReference type="PaxDb" id="10090-ENSMUSP00000017148"/>
<dbReference type="PeptideAtlas" id="P30933"/>
<dbReference type="ProteomicsDB" id="254612"/>
<dbReference type="DNASU" id="20944"/>
<dbReference type="Ensembl" id="ENSMUST00000017148.8">
    <property type="protein sequence ID" value="ENSMUSP00000017148.8"/>
    <property type="gene ID" value="ENSMUSG00000017004.8"/>
</dbReference>
<dbReference type="GeneID" id="20944"/>
<dbReference type="KEGG" id="mmu:20944"/>
<dbReference type="UCSC" id="uc008nui.1">
    <property type="organism name" value="mouse"/>
</dbReference>
<dbReference type="AGR" id="MGI:98453"/>
<dbReference type="CTD" id="20944"/>
<dbReference type="MGI" id="MGI:98453">
    <property type="gene designation" value="Svs5"/>
</dbReference>
<dbReference type="VEuPathDB" id="HostDB:ENSMUSG00000017004"/>
<dbReference type="GeneTree" id="ENSGT00730000113952"/>
<dbReference type="HOGENOM" id="CLU_2025961_0_0_1"/>
<dbReference type="InParanoid" id="P30933"/>
<dbReference type="OMA" id="EMNPFET"/>
<dbReference type="OrthoDB" id="9634879at2759"/>
<dbReference type="TreeFam" id="TF353660"/>
<dbReference type="BioGRID-ORCS" id="20944">
    <property type="hits" value="1 hit in 76 CRISPR screens"/>
</dbReference>
<dbReference type="ChiTaRS" id="Svs5">
    <property type="organism name" value="mouse"/>
</dbReference>
<dbReference type="PRO" id="PR:P30933"/>
<dbReference type="Proteomes" id="UP000000589">
    <property type="component" value="Chromosome 2"/>
</dbReference>
<dbReference type="RNAct" id="P30933">
    <property type="molecule type" value="protein"/>
</dbReference>
<dbReference type="Bgee" id="ENSMUSG00000017004">
    <property type="expression patterns" value="Expressed in seminal vesicle and 34 other cell types or tissues"/>
</dbReference>
<dbReference type="ExpressionAtlas" id="P30933">
    <property type="expression patterns" value="baseline and differential"/>
</dbReference>
<dbReference type="GO" id="GO:0005576">
    <property type="term" value="C:extracellular region"/>
    <property type="evidence" value="ECO:0007669"/>
    <property type="project" value="UniProtKB-SubCell"/>
</dbReference>
<dbReference type="InterPro" id="IPR035409">
    <property type="entry name" value="Svs4/5/6"/>
</dbReference>
<dbReference type="PANTHER" id="PTHR17498:SF3">
    <property type="entry name" value="SEMINAL VESICLE SECRETORY PROTEIN 5"/>
    <property type="match status" value="1"/>
</dbReference>
<dbReference type="PANTHER" id="PTHR17498">
    <property type="entry name" value="SEMINAL VESICLE SECRETORY PROTEIN 6-RELATED"/>
    <property type="match status" value="1"/>
</dbReference>
<dbReference type="Pfam" id="PF17381">
    <property type="entry name" value="Svs_4_5_6"/>
    <property type="match status" value="1"/>
</dbReference>
<accession>P30933</accession>
<protein>
    <recommendedName>
        <fullName>Seminal vesicle secretory protein 5</fullName>
    </recommendedName>
    <alternativeName>
        <fullName>SVS protein F</fullName>
    </alternativeName>
    <alternativeName>
        <fullName>Seminal vesicle secretory protein V</fullName>
        <shortName>SVS V</shortName>
    </alternativeName>
</protein>
<organism>
    <name type="scientific">Mus musculus</name>
    <name type="common">Mouse</name>
    <dbReference type="NCBI Taxonomy" id="10090"/>
    <lineage>
        <taxon>Eukaryota</taxon>
        <taxon>Metazoa</taxon>
        <taxon>Chordata</taxon>
        <taxon>Craniata</taxon>
        <taxon>Vertebrata</taxon>
        <taxon>Euteleostomi</taxon>
        <taxon>Mammalia</taxon>
        <taxon>Eutheria</taxon>
        <taxon>Euarchontoglires</taxon>
        <taxon>Glires</taxon>
        <taxon>Rodentia</taxon>
        <taxon>Myomorpha</taxon>
        <taxon>Muroidea</taxon>
        <taxon>Muridae</taxon>
        <taxon>Murinae</taxon>
        <taxon>Mus</taxon>
        <taxon>Mus</taxon>
    </lineage>
</organism>
<reference key="1">
    <citation type="submission" date="1991-11" db="EMBL/GenBank/DDBJ databases">
        <authorList>
            <person name="Clouston P.J."/>
            <person name="McIntosh E."/>
            <person name="Keeney S."/>
            <person name="Higgins S.J."/>
        </authorList>
    </citation>
    <scope>NUCLEOTIDE SEQUENCE [MRNA]</scope>
</reference>
<reference key="2">
    <citation type="submission" date="1991-01" db="EMBL/GenBank/DDBJ databases">
        <authorList>
            <person name="Coleman R.T."/>
            <person name="Miller J.A."/>
            <person name="Ponte P.A."/>
        </authorList>
    </citation>
    <scope>NUCLEOTIDE SEQUENCE [MRNA]</scope>
    <source>
        <strain>C57BL/6J</strain>
    </source>
</reference>
<name>SVS5_MOUSE</name>